<organism>
    <name type="scientific">Geobacter metallireducens (strain ATCC 53774 / DSM 7210 / GS-15)</name>
    <dbReference type="NCBI Taxonomy" id="269799"/>
    <lineage>
        <taxon>Bacteria</taxon>
        <taxon>Pseudomonadati</taxon>
        <taxon>Thermodesulfobacteriota</taxon>
        <taxon>Desulfuromonadia</taxon>
        <taxon>Geobacterales</taxon>
        <taxon>Geobacteraceae</taxon>
        <taxon>Geobacter</taxon>
    </lineage>
</organism>
<reference key="1">
    <citation type="journal article" date="2009" name="BMC Microbiol.">
        <title>The genome sequence of Geobacter metallireducens: features of metabolism, physiology and regulation common and dissimilar to Geobacter sulfurreducens.</title>
        <authorList>
            <person name="Aklujkar M."/>
            <person name="Krushkal J."/>
            <person name="DiBartolo G."/>
            <person name="Lapidus A."/>
            <person name="Land M.L."/>
            <person name="Lovley D.R."/>
        </authorList>
    </citation>
    <scope>NUCLEOTIDE SEQUENCE [LARGE SCALE GENOMIC DNA]</scope>
    <source>
        <strain>ATCC 53774 / DSM 7210 / GS-15</strain>
    </source>
</reference>
<protein>
    <recommendedName>
        <fullName evidence="1">Tetraacyldisaccharide 4'-kinase</fullName>
        <ecNumber evidence="1">2.7.1.130</ecNumber>
    </recommendedName>
    <alternativeName>
        <fullName evidence="1">Lipid A 4'-kinase</fullName>
    </alternativeName>
</protein>
<feature type="chain" id="PRO_0000229956" description="Tetraacyldisaccharide 4'-kinase">
    <location>
        <begin position="1"/>
        <end position="338"/>
    </location>
</feature>
<feature type="binding site" evidence="1">
    <location>
        <begin position="49"/>
        <end position="56"/>
    </location>
    <ligand>
        <name>ATP</name>
        <dbReference type="ChEBI" id="CHEBI:30616"/>
    </ligand>
</feature>
<accession>Q39T52</accession>
<name>LPXK_GEOMG</name>
<gene>
    <name evidence="1" type="primary">lpxK</name>
    <name type="ordered locus">Gmet_2347</name>
</gene>
<keyword id="KW-0067">ATP-binding</keyword>
<keyword id="KW-0418">Kinase</keyword>
<keyword id="KW-0441">Lipid A biosynthesis</keyword>
<keyword id="KW-0444">Lipid biosynthesis</keyword>
<keyword id="KW-0443">Lipid metabolism</keyword>
<keyword id="KW-0547">Nucleotide-binding</keyword>
<keyword id="KW-1185">Reference proteome</keyword>
<keyword id="KW-0808">Transferase</keyword>
<evidence type="ECO:0000255" key="1">
    <source>
        <dbReference type="HAMAP-Rule" id="MF_00409"/>
    </source>
</evidence>
<evidence type="ECO:0000305" key="2"/>
<comment type="function">
    <text evidence="1">Transfers the gamma-phosphate of ATP to the 4'-position of a tetraacyldisaccharide 1-phosphate intermediate (termed DS-1-P) to form tetraacyldisaccharide 1,4'-bis-phosphate (lipid IVA).</text>
</comment>
<comment type="catalytic activity">
    <reaction evidence="1">
        <text>a lipid A disaccharide + ATP = a lipid IVA + ADP + H(+)</text>
        <dbReference type="Rhea" id="RHEA:67840"/>
        <dbReference type="ChEBI" id="CHEBI:15378"/>
        <dbReference type="ChEBI" id="CHEBI:30616"/>
        <dbReference type="ChEBI" id="CHEBI:176343"/>
        <dbReference type="ChEBI" id="CHEBI:176425"/>
        <dbReference type="ChEBI" id="CHEBI:456216"/>
        <dbReference type="EC" id="2.7.1.130"/>
    </reaction>
</comment>
<comment type="pathway">
    <text evidence="1">Glycolipid biosynthesis; lipid IV(A) biosynthesis; lipid IV(A) from (3R)-3-hydroxytetradecanoyl-[acyl-carrier-protein] and UDP-N-acetyl-alpha-D-glucosamine: step 6/6.</text>
</comment>
<comment type="similarity">
    <text evidence="1">Belongs to the LpxK family.</text>
</comment>
<comment type="sequence caution" evidence="2">
    <conflict type="erroneous initiation">
        <sequence resource="EMBL-CDS" id="ABB32572"/>
    </conflict>
</comment>
<proteinExistence type="inferred from homology"/>
<dbReference type="EC" id="2.7.1.130" evidence="1"/>
<dbReference type="EMBL" id="CP000148">
    <property type="protein sequence ID" value="ABB32572.1"/>
    <property type="status" value="ALT_INIT"/>
    <property type="molecule type" value="Genomic_DNA"/>
</dbReference>
<dbReference type="SMR" id="Q39T52"/>
<dbReference type="STRING" id="269799.Gmet_2347"/>
<dbReference type="KEGG" id="gme:Gmet_2347"/>
<dbReference type="eggNOG" id="COG1663">
    <property type="taxonomic scope" value="Bacteria"/>
</dbReference>
<dbReference type="HOGENOM" id="CLU_038816_6_0_7"/>
<dbReference type="UniPathway" id="UPA00359">
    <property type="reaction ID" value="UER00482"/>
</dbReference>
<dbReference type="Proteomes" id="UP000007073">
    <property type="component" value="Chromosome"/>
</dbReference>
<dbReference type="GO" id="GO:0005886">
    <property type="term" value="C:plasma membrane"/>
    <property type="evidence" value="ECO:0007669"/>
    <property type="project" value="TreeGrafter"/>
</dbReference>
<dbReference type="GO" id="GO:0005524">
    <property type="term" value="F:ATP binding"/>
    <property type="evidence" value="ECO:0007669"/>
    <property type="project" value="UniProtKB-UniRule"/>
</dbReference>
<dbReference type="GO" id="GO:0009029">
    <property type="term" value="F:tetraacyldisaccharide 4'-kinase activity"/>
    <property type="evidence" value="ECO:0007669"/>
    <property type="project" value="UniProtKB-UniRule"/>
</dbReference>
<dbReference type="GO" id="GO:0009245">
    <property type="term" value="P:lipid A biosynthetic process"/>
    <property type="evidence" value="ECO:0007669"/>
    <property type="project" value="UniProtKB-UniRule"/>
</dbReference>
<dbReference type="GO" id="GO:0009244">
    <property type="term" value="P:lipopolysaccharide core region biosynthetic process"/>
    <property type="evidence" value="ECO:0007669"/>
    <property type="project" value="TreeGrafter"/>
</dbReference>
<dbReference type="CDD" id="cd01983">
    <property type="entry name" value="SIMIBI"/>
    <property type="match status" value="1"/>
</dbReference>
<dbReference type="HAMAP" id="MF_00409">
    <property type="entry name" value="LpxK"/>
    <property type="match status" value="1"/>
</dbReference>
<dbReference type="InterPro" id="IPR003758">
    <property type="entry name" value="LpxK"/>
</dbReference>
<dbReference type="InterPro" id="IPR027417">
    <property type="entry name" value="P-loop_NTPase"/>
</dbReference>
<dbReference type="NCBIfam" id="TIGR00682">
    <property type="entry name" value="lpxK"/>
    <property type="match status" value="1"/>
</dbReference>
<dbReference type="PANTHER" id="PTHR42724">
    <property type="entry name" value="TETRAACYLDISACCHARIDE 4'-KINASE"/>
    <property type="match status" value="1"/>
</dbReference>
<dbReference type="PANTHER" id="PTHR42724:SF1">
    <property type="entry name" value="TETRAACYLDISACCHARIDE 4'-KINASE, MITOCHONDRIAL-RELATED"/>
    <property type="match status" value="1"/>
</dbReference>
<dbReference type="Pfam" id="PF02606">
    <property type="entry name" value="LpxK"/>
    <property type="match status" value="1"/>
</dbReference>
<dbReference type="SUPFAM" id="SSF52540">
    <property type="entry name" value="P-loop containing nucleoside triphosphate hydrolases"/>
    <property type="match status" value="1"/>
</dbReference>
<sequence>MLDRLVLALLAVLSVPYALAVRLRALAYGAGIFRVKQLNRPVISVGNLTVGGTGKTPMVALVARLLMARGKRVAVISRGYGGSLEGKTHIVSDGQRVFLSAAEAGDEPVHLATAVPGLMAVIGTDRYAAGLLAQERLNPDVFILDDGFQHLRLHRDLNILLMDCSAPLGNGMVLPAGLLREPPLALKRADLVVYTRCTGAEAPAVHGAIPSCRAGHVLAGVELLPGGERQPFTALYGRRGVAFAGIADPDAFFASLREEGVDLAATVSFGDHCPYGEEEVARLMAARRTAGADFLITTGKDAVKLGPVLSRLGIVYAAVLEMSLMDPKPLETAIDKVL</sequence>